<keyword id="KW-0067">ATP-binding</keyword>
<keyword id="KW-0963">Cytoplasm</keyword>
<keyword id="KW-0227">DNA damage</keyword>
<keyword id="KW-0228">DNA excision</keyword>
<keyword id="KW-0234">DNA repair</keyword>
<keyword id="KW-0238">DNA-binding</keyword>
<keyword id="KW-0267">Excision nuclease</keyword>
<keyword id="KW-0479">Metal-binding</keyword>
<keyword id="KW-0547">Nucleotide-binding</keyword>
<keyword id="KW-1185">Reference proteome</keyword>
<keyword id="KW-0677">Repeat</keyword>
<keyword id="KW-0742">SOS response</keyword>
<keyword id="KW-0862">Zinc</keyword>
<keyword id="KW-0863">Zinc-finger</keyword>
<sequence length="943" mass="104185">MQDKIVIHGARAHNLKNIDVEIPRDKLVVVTGLSGSGKSSLAFDTLYAEGQRRYVESLSAYARQFLGNMEKPDVDAIDGLSPAISIDQKTTSKNPRSTVGTTTEINDYLRLLYARVGTPYCINGHGAINASSVEQIVDKVLELPERQRLQILAPVIRKKKGQHKSVIEKVQKDGYVRVRVDGEVYDVTEVPELSKSKQHNIDVVVDRIVIKEGIRSRLFDSIEAALRIAEGYVIIDTMDDSELLFSEHYACPVCGFTVPELEPRLFSFNAPFGSCSECDGLGIKLEVDTDLVVPDASKTLREGALAPWNPISSNYYPNMLEQAMKVFGVAMDKPFEDLSEEDKNLILYGSDGKEFHFHYENEFGGVRDIDIPFEGVINNIKRRYHETNSDYTRTQMRLYMNELTCGTCQGYRLNDQALSVRVGGQQGPHIGEISDLSIADHLDLVSQLTLSENEAIIARPILKEIKDRLTFLNNVGLNYLTLSRSAGTLSGGESQRIRLATQIGSNLSGVLYILDEPSIGLHQRDNDRLIASLKKMRDLGNTLIVVEHDEDTMREADYLIDVGPGAGVFGGEIVAAGTPKQVARNSKSITGQYLSGKRVIPVPEERRVGNGRFIEVIGARENNLQNVTARFPLGKFIAVTGVSGSGKSTLINSILKKAIAQKLNRNSDKPGKFKTITGIEHVDRLIDIDQSPIGRTPRSNPATYTGVFDDIRDLFAQTNEAKIRGYKKGRFSFNVKGGRCEACSGDGIIKIEMHFLPDVYVACEVCHGTRYNSETLEVHYKEKNISQVLDMTVNDAVEFFQHIPKIQRKLQTIKDVGLGYVTLGQPATTLSGGEAQRMKLASELHKRSTGKSFYILDEPTTGLHTEDIARLLKVLARFVDDGNTVLVIEHNLDVIKTADHIIDLGPEGGVGGGTIIVTGTPEEVAANEASYTGHYLKGKLHHE</sequence>
<protein>
    <recommendedName>
        <fullName evidence="1">UvrABC system protein A</fullName>
        <shortName evidence="1">UvrA protein</shortName>
    </recommendedName>
    <alternativeName>
        <fullName evidence="1">Excinuclease ABC subunit A</fullName>
    </alternativeName>
</protein>
<evidence type="ECO:0000255" key="1">
    <source>
        <dbReference type="HAMAP-Rule" id="MF_00205"/>
    </source>
</evidence>
<reference key="1">
    <citation type="journal article" date="2001" name="J. Bacteriol.">
        <title>Genome of the bacterium Streptococcus pneumoniae strain R6.</title>
        <authorList>
            <person name="Hoskins J."/>
            <person name="Alborn W.E. Jr."/>
            <person name="Arnold J."/>
            <person name="Blaszczak L.C."/>
            <person name="Burgett S."/>
            <person name="DeHoff B.S."/>
            <person name="Estrem S.T."/>
            <person name="Fritz L."/>
            <person name="Fu D.-J."/>
            <person name="Fuller W."/>
            <person name="Geringer C."/>
            <person name="Gilmour R."/>
            <person name="Glass J.S."/>
            <person name="Khoja H."/>
            <person name="Kraft A.R."/>
            <person name="Lagace R.E."/>
            <person name="LeBlanc D.J."/>
            <person name="Lee L.N."/>
            <person name="Lefkowitz E.J."/>
            <person name="Lu J."/>
            <person name="Matsushima P."/>
            <person name="McAhren S.M."/>
            <person name="McHenney M."/>
            <person name="McLeaster K."/>
            <person name="Mundy C.W."/>
            <person name="Nicas T.I."/>
            <person name="Norris F.H."/>
            <person name="O'Gara M."/>
            <person name="Peery R.B."/>
            <person name="Robertson G.T."/>
            <person name="Rockey P."/>
            <person name="Sun P.-M."/>
            <person name="Winkler M.E."/>
            <person name="Yang Y."/>
            <person name="Young-Bellido M."/>
            <person name="Zhao G."/>
            <person name="Zook C.A."/>
            <person name="Baltz R.H."/>
            <person name="Jaskunas S.R."/>
            <person name="Rosteck P.R. Jr."/>
            <person name="Skatrud P.L."/>
            <person name="Glass J.I."/>
        </authorList>
    </citation>
    <scope>NUCLEOTIDE SEQUENCE [LARGE SCALE GENOMIC DNA]</scope>
    <source>
        <strain>ATCC BAA-255 / R6</strain>
    </source>
</reference>
<feature type="chain" id="PRO_0000093101" description="UvrABC system protein A">
    <location>
        <begin position="1"/>
        <end position="943"/>
    </location>
</feature>
<feature type="domain" description="ABC transporter 1" evidence="1">
    <location>
        <begin position="308"/>
        <end position="589"/>
    </location>
</feature>
<feature type="domain" description="ABC transporter 2" evidence="1">
    <location>
        <begin position="609"/>
        <end position="937"/>
    </location>
</feature>
<feature type="zinc finger region" description="C4-type" evidence="1">
    <location>
        <begin position="251"/>
        <end position="278"/>
    </location>
</feature>
<feature type="zinc finger region" description="C4-type" evidence="1">
    <location>
        <begin position="740"/>
        <end position="766"/>
    </location>
</feature>
<feature type="binding site" evidence="1">
    <location>
        <begin position="32"/>
        <end position="39"/>
    </location>
    <ligand>
        <name>ATP</name>
        <dbReference type="ChEBI" id="CHEBI:30616"/>
    </ligand>
</feature>
<feature type="binding site" evidence="1">
    <location>
        <begin position="641"/>
        <end position="648"/>
    </location>
    <ligand>
        <name>ATP</name>
        <dbReference type="ChEBI" id="CHEBI:30616"/>
    </ligand>
</feature>
<dbReference type="EMBL" id="AE007317">
    <property type="protein sequence ID" value="AAK98975.1"/>
    <property type="molecule type" value="Genomic_DNA"/>
</dbReference>
<dbReference type="PIR" id="C97893">
    <property type="entry name" value="C97893"/>
</dbReference>
<dbReference type="RefSeq" id="NP_357765.1">
    <property type="nucleotide sequence ID" value="NC_003098.1"/>
</dbReference>
<dbReference type="RefSeq" id="WP_001152899.1">
    <property type="nucleotide sequence ID" value="NC_003098.1"/>
</dbReference>
<dbReference type="SMR" id="P63385"/>
<dbReference type="STRING" id="171101.spr0171"/>
<dbReference type="GeneID" id="45652326"/>
<dbReference type="KEGG" id="spr:spr0171"/>
<dbReference type="PATRIC" id="fig|171101.6.peg.203"/>
<dbReference type="eggNOG" id="COG0178">
    <property type="taxonomic scope" value="Bacteria"/>
</dbReference>
<dbReference type="HOGENOM" id="CLU_001370_0_2_9"/>
<dbReference type="Proteomes" id="UP000000586">
    <property type="component" value="Chromosome"/>
</dbReference>
<dbReference type="GO" id="GO:0005737">
    <property type="term" value="C:cytoplasm"/>
    <property type="evidence" value="ECO:0007669"/>
    <property type="project" value="UniProtKB-SubCell"/>
</dbReference>
<dbReference type="GO" id="GO:0009380">
    <property type="term" value="C:excinuclease repair complex"/>
    <property type="evidence" value="ECO:0007669"/>
    <property type="project" value="InterPro"/>
</dbReference>
<dbReference type="GO" id="GO:0005524">
    <property type="term" value="F:ATP binding"/>
    <property type="evidence" value="ECO:0007669"/>
    <property type="project" value="UniProtKB-UniRule"/>
</dbReference>
<dbReference type="GO" id="GO:0016887">
    <property type="term" value="F:ATP hydrolysis activity"/>
    <property type="evidence" value="ECO:0007669"/>
    <property type="project" value="InterPro"/>
</dbReference>
<dbReference type="GO" id="GO:0003677">
    <property type="term" value="F:DNA binding"/>
    <property type="evidence" value="ECO:0007669"/>
    <property type="project" value="UniProtKB-UniRule"/>
</dbReference>
<dbReference type="GO" id="GO:0009381">
    <property type="term" value="F:excinuclease ABC activity"/>
    <property type="evidence" value="ECO:0007669"/>
    <property type="project" value="UniProtKB-UniRule"/>
</dbReference>
<dbReference type="GO" id="GO:0008270">
    <property type="term" value="F:zinc ion binding"/>
    <property type="evidence" value="ECO:0007669"/>
    <property type="project" value="UniProtKB-UniRule"/>
</dbReference>
<dbReference type="GO" id="GO:0006289">
    <property type="term" value="P:nucleotide-excision repair"/>
    <property type="evidence" value="ECO:0007669"/>
    <property type="project" value="UniProtKB-UniRule"/>
</dbReference>
<dbReference type="GO" id="GO:0009432">
    <property type="term" value="P:SOS response"/>
    <property type="evidence" value="ECO:0007669"/>
    <property type="project" value="UniProtKB-UniRule"/>
</dbReference>
<dbReference type="CDD" id="cd03270">
    <property type="entry name" value="ABC_UvrA_I"/>
    <property type="match status" value="1"/>
</dbReference>
<dbReference type="CDD" id="cd03271">
    <property type="entry name" value="ABC_UvrA_II"/>
    <property type="match status" value="1"/>
</dbReference>
<dbReference type="FunFam" id="1.20.1580.10:FF:000002">
    <property type="entry name" value="UvrABC system protein A"/>
    <property type="match status" value="1"/>
</dbReference>
<dbReference type="FunFam" id="3.40.50.300:FF:000028">
    <property type="entry name" value="UvrABC system protein A"/>
    <property type="match status" value="1"/>
</dbReference>
<dbReference type="Gene3D" id="1.10.8.280">
    <property type="entry name" value="ABC transporter ATPase domain-like"/>
    <property type="match status" value="1"/>
</dbReference>
<dbReference type="Gene3D" id="1.20.1580.10">
    <property type="entry name" value="ABC transporter ATPase like domain"/>
    <property type="match status" value="2"/>
</dbReference>
<dbReference type="Gene3D" id="3.30.1490.20">
    <property type="entry name" value="ATP-grasp fold, A domain"/>
    <property type="match status" value="1"/>
</dbReference>
<dbReference type="Gene3D" id="3.40.50.300">
    <property type="entry name" value="P-loop containing nucleotide triphosphate hydrolases"/>
    <property type="match status" value="2"/>
</dbReference>
<dbReference type="HAMAP" id="MF_00205">
    <property type="entry name" value="UvrA"/>
    <property type="match status" value="1"/>
</dbReference>
<dbReference type="InterPro" id="IPR003593">
    <property type="entry name" value="AAA+_ATPase"/>
</dbReference>
<dbReference type="InterPro" id="IPR003439">
    <property type="entry name" value="ABC_transporter-like_ATP-bd"/>
</dbReference>
<dbReference type="InterPro" id="IPR017871">
    <property type="entry name" value="ABC_transporter-like_CS"/>
</dbReference>
<dbReference type="InterPro" id="IPR013815">
    <property type="entry name" value="ATP_grasp_subdomain_1"/>
</dbReference>
<dbReference type="InterPro" id="IPR027417">
    <property type="entry name" value="P-loop_NTPase"/>
</dbReference>
<dbReference type="InterPro" id="IPR004602">
    <property type="entry name" value="UvrA"/>
</dbReference>
<dbReference type="InterPro" id="IPR041552">
    <property type="entry name" value="UvrA_DNA-bd"/>
</dbReference>
<dbReference type="InterPro" id="IPR041102">
    <property type="entry name" value="UvrA_inter"/>
</dbReference>
<dbReference type="NCBIfam" id="NF001503">
    <property type="entry name" value="PRK00349.1"/>
    <property type="match status" value="1"/>
</dbReference>
<dbReference type="NCBIfam" id="TIGR00630">
    <property type="entry name" value="uvra"/>
    <property type="match status" value="1"/>
</dbReference>
<dbReference type="PANTHER" id="PTHR43152">
    <property type="entry name" value="UVRABC SYSTEM PROTEIN A"/>
    <property type="match status" value="1"/>
</dbReference>
<dbReference type="PANTHER" id="PTHR43152:SF3">
    <property type="entry name" value="UVRABC SYSTEM PROTEIN A"/>
    <property type="match status" value="1"/>
</dbReference>
<dbReference type="Pfam" id="PF17755">
    <property type="entry name" value="UvrA_DNA-bind"/>
    <property type="match status" value="1"/>
</dbReference>
<dbReference type="Pfam" id="PF17760">
    <property type="entry name" value="UvrA_inter"/>
    <property type="match status" value="1"/>
</dbReference>
<dbReference type="SMART" id="SM00382">
    <property type="entry name" value="AAA"/>
    <property type="match status" value="2"/>
</dbReference>
<dbReference type="SUPFAM" id="SSF52540">
    <property type="entry name" value="P-loop containing nucleoside triphosphate hydrolases"/>
    <property type="match status" value="2"/>
</dbReference>
<dbReference type="PROSITE" id="PS00211">
    <property type="entry name" value="ABC_TRANSPORTER_1"/>
    <property type="match status" value="2"/>
</dbReference>
<dbReference type="PROSITE" id="PS50893">
    <property type="entry name" value="ABC_TRANSPORTER_2"/>
    <property type="match status" value="1"/>
</dbReference>
<comment type="function">
    <text evidence="1">The UvrABC repair system catalyzes the recognition and processing of DNA lesions. UvrA is an ATPase and a DNA-binding protein. A damage recognition complex composed of 2 UvrA and 2 UvrB subunits scans DNA for abnormalities. When the presence of a lesion has been verified by UvrB, the UvrA molecules dissociate.</text>
</comment>
<comment type="subunit">
    <text evidence="1">Forms a heterotetramer with UvrB during the search for lesions.</text>
</comment>
<comment type="subcellular location">
    <subcellularLocation>
        <location evidence="1">Cytoplasm</location>
    </subcellularLocation>
</comment>
<comment type="similarity">
    <text evidence="1">Belongs to the ABC transporter superfamily. UvrA family.</text>
</comment>
<name>UVRA_STRR6</name>
<organism>
    <name type="scientific">Streptococcus pneumoniae (strain ATCC BAA-255 / R6)</name>
    <dbReference type="NCBI Taxonomy" id="171101"/>
    <lineage>
        <taxon>Bacteria</taxon>
        <taxon>Bacillati</taxon>
        <taxon>Bacillota</taxon>
        <taxon>Bacilli</taxon>
        <taxon>Lactobacillales</taxon>
        <taxon>Streptococcaceae</taxon>
        <taxon>Streptococcus</taxon>
    </lineage>
</organism>
<gene>
    <name evidence="1" type="primary">uvrA</name>
    <name type="ordered locus">spr0171</name>
</gene>
<accession>P63385</accession>
<accession>Q97SX7</accession>
<proteinExistence type="inferred from homology"/>